<evidence type="ECO:0000250" key="1"/>
<evidence type="ECO:0000255" key="2">
    <source>
        <dbReference type="PROSITE-ProRule" id="PRU00393"/>
    </source>
</evidence>
<evidence type="ECO:0000255" key="3">
    <source>
        <dbReference type="PROSITE-ProRule" id="PRU00394"/>
    </source>
</evidence>
<keyword id="KW-0238">DNA-binding</keyword>
<keyword id="KW-1185">Reference proteome</keyword>
<keyword id="KW-0678">Repressor</keyword>
<keyword id="KW-0804">Transcription</keyword>
<keyword id="KW-0805">Transcription regulation</keyword>
<gene>
    <name type="primary">allR</name>
    <name type="ordered locus">c0621</name>
</gene>
<accession>P0ACN5</accession>
<accession>P77734</accession>
<organism>
    <name type="scientific">Escherichia coli O6:H1 (strain CFT073 / ATCC 700928 / UPEC)</name>
    <dbReference type="NCBI Taxonomy" id="199310"/>
    <lineage>
        <taxon>Bacteria</taxon>
        <taxon>Pseudomonadati</taxon>
        <taxon>Pseudomonadota</taxon>
        <taxon>Gammaproteobacteria</taxon>
        <taxon>Enterobacterales</taxon>
        <taxon>Enterobacteriaceae</taxon>
        <taxon>Escherichia</taxon>
    </lineage>
</organism>
<dbReference type="EMBL" id="AE014075">
    <property type="protein sequence ID" value="AAN79098.1"/>
    <property type="molecule type" value="Genomic_DNA"/>
</dbReference>
<dbReference type="RefSeq" id="WP_000141275.1">
    <property type="nucleotide sequence ID" value="NZ_CP051263.1"/>
</dbReference>
<dbReference type="SMR" id="P0ACN5"/>
<dbReference type="STRING" id="199310.c0621"/>
<dbReference type="GeneID" id="86945421"/>
<dbReference type="KEGG" id="ecc:c0621"/>
<dbReference type="eggNOG" id="COG1414">
    <property type="taxonomic scope" value="Bacteria"/>
</dbReference>
<dbReference type="HOGENOM" id="CLU_062618_7_1_6"/>
<dbReference type="BioCyc" id="ECOL199310:C0621-MONOMER"/>
<dbReference type="Proteomes" id="UP000001410">
    <property type="component" value="Chromosome"/>
</dbReference>
<dbReference type="GO" id="GO:0003677">
    <property type="term" value="F:DNA binding"/>
    <property type="evidence" value="ECO:0007669"/>
    <property type="project" value="UniProtKB-KW"/>
</dbReference>
<dbReference type="GO" id="GO:0003700">
    <property type="term" value="F:DNA-binding transcription factor activity"/>
    <property type="evidence" value="ECO:0007669"/>
    <property type="project" value="TreeGrafter"/>
</dbReference>
<dbReference type="GO" id="GO:0045892">
    <property type="term" value="P:negative regulation of DNA-templated transcription"/>
    <property type="evidence" value="ECO:0007669"/>
    <property type="project" value="TreeGrafter"/>
</dbReference>
<dbReference type="FunFam" id="1.10.10.10:FF:000198">
    <property type="entry name" value="HTH-type transcriptional repressor AllR"/>
    <property type="match status" value="1"/>
</dbReference>
<dbReference type="FunFam" id="3.30.450.40:FF:000017">
    <property type="entry name" value="HTH-type transcriptional repressor AllR"/>
    <property type="match status" value="1"/>
</dbReference>
<dbReference type="Gene3D" id="3.30.450.40">
    <property type="match status" value="1"/>
</dbReference>
<dbReference type="Gene3D" id="1.10.10.10">
    <property type="entry name" value="Winged helix-like DNA-binding domain superfamily/Winged helix DNA-binding domain"/>
    <property type="match status" value="1"/>
</dbReference>
<dbReference type="InterPro" id="IPR029016">
    <property type="entry name" value="GAF-like_dom_sf"/>
</dbReference>
<dbReference type="InterPro" id="IPR050707">
    <property type="entry name" value="HTH_MetabolicPath_Reg"/>
</dbReference>
<dbReference type="InterPro" id="IPR014757">
    <property type="entry name" value="Tscrpt_reg_IclR_C"/>
</dbReference>
<dbReference type="InterPro" id="IPR005471">
    <property type="entry name" value="Tscrpt_reg_IclR_N"/>
</dbReference>
<dbReference type="InterPro" id="IPR036388">
    <property type="entry name" value="WH-like_DNA-bd_sf"/>
</dbReference>
<dbReference type="InterPro" id="IPR036390">
    <property type="entry name" value="WH_DNA-bd_sf"/>
</dbReference>
<dbReference type="NCBIfam" id="NF007548">
    <property type="entry name" value="PRK10163.1"/>
    <property type="match status" value="1"/>
</dbReference>
<dbReference type="PANTHER" id="PTHR30136">
    <property type="entry name" value="HELIX-TURN-HELIX TRANSCRIPTIONAL REGULATOR, ICLR FAMILY"/>
    <property type="match status" value="1"/>
</dbReference>
<dbReference type="PANTHER" id="PTHR30136:SF24">
    <property type="entry name" value="HTH-TYPE TRANSCRIPTIONAL REPRESSOR ALLR"/>
    <property type="match status" value="1"/>
</dbReference>
<dbReference type="Pfam" id="PF09339">
    <property type="entry name" value="HTH_IclR"/>
    <property type="match status" value="1"/>
</dbReference>
<dbReference type="Pfam" id="PF01614">
    <property type="entry name" value="IclR_C"/>
    <property type="match status" value="1"/>
</dbReference>
<dbReference type="SMART" id="SM00346">
    <property type="entry name" value="HTH_ICLR"/>
    <property type="match status" value="1"/>
</dbReference>
<dbReference type="SUPFAM" id="SSF55781">
    <property type="entry name" value="GAF domain-like"/>
    <property type="match status" value="1"/>
</dbReference>
<dbReference type="SUPFAM" id="SSF46785">
    <property type="entry name" value="Winged helix' DNA-binding domain"/>
    <property type="match status" value="1"/>
</dbReference>
<dbReference type="PROSITE" id="PS51077">
    <property type="entry name" value="HTH_ICLR"/>
    <property type="match status" value="1"/>
</dbReference>
<dbReference type="PROSITE" id="PS51078">
    <property type="entry name" value="ICLR_ED"/>
    <property type="match status" value="1"/>
</dbReference>
<comment type="function">
    <text evidence="1">Negative regulator of allantoin and glyoxylate utilization operons. Binds to the gcl promoter and to the allS-allA intergenic region (By similarity).</text>
</comment>
<sequence>MTEVRRRGRPGQAEPVAQKGAQALERGIAILQYLEKSGGSSSVSDISLNLDLPLSTTFRLLKVLQAADFVYQDSQLGWWHIGLGVFNVGAAYIHNRDVLSVAGPFMRRLMLLSGETVNVAIRNGNEAVLIGQLECKSMVRMCAPLGSRLPLHASGAGKALLYPLAEEELMSIILQTGLQQFTPTTLVDMPTLLKDLEQARELGYTVDKEEHVVGLNCIASAIYDDVGSVVAAISISGPSSRLTEDRFVSQGELVRDTARDISTALGLKAHP</sequence>
<protein>
    <recommendedName>
        <fullName>HTH-type transcriptional repressor AllR</fullName>
    </recommendedName>
    <alternativeName>
        <fullName>Negative regulator of allantoin and glyoxylate utilization operons</fullName>
    </alternativeName>
</protein>
<reference key="1">
    <citation type="journal article" date="2002" name="Proc. Natl. Acad. Sci. U.S.A.">
        <title>Extensive mosaic structure revealed by the complete genome sequence of uropathogenic Escherichia coli.</title>
        <authorList>
            <person name="Welch R.A."/>
            <person name="Burland V."/>
            <person name="Plunkett G. III"/>
            <person name="Redford P."/>
            <person name="Roesch P."/>
            <person name="Rasko D."/>
            <person name="Buckles E.L."/>
            <person name="Liou S.-R."/>
            <person name="Boutin A."/>
            <person name="Hackett J."/>
            <person name="Stroud D."/>
            <person name="Mayhew G.F."/>
            <person name="Rose D.J."/>
            <person name="Zhou S."/>
            <person name="Schwartz D.C."/>
            <person name="Perna N.T."/>
            <person name="Mobley H.L.T."/>
            <person name="Donnenberg M.S."/>
            <person name="Blattner F.R."/>
        </authorList>
    </citation>
    <scope>NUCLEOTIDE SEQUENCE [LARGE SCALE GENOMIC DNA]</scope>
    <source>
        <strain>CFT073 / ATCC 700928 / UPEC</strain>
    </source>
</reference>
<proteinExistence type="inferred from homology"/>
<feature type="chain" id="PRO_0000201755" description="HTH-type transcriptional repressor AllR">
    <location>
        <begin position="1"/>
        <end position="271"/>
    </location>
</feature>
<feature type="domain" description="HTH iclR-type" evidence="2">
    <location>
        <begin position="21"/>
        <end position="83"/>
    </location>
</feature>
<feature type="domain" description="IclR-ED" evidence="3">
    <location>
        <begin position="98"/>
        <end position="267"/>
    </location>
</feature>
<feature type="DNA-binding region" description="H-T-H motif" evidence="2">
    <location>
        <begin position="43"/>
        <end position="62"/>
    </location>
</feature>
<feature type="binding site" evidence="1">
    <location>
        <begin position="154"/>
        <end position="156"/>
    </location>
    <ligand>
        <name>glyoxylate</name>
        <dbReference type="ChEBI" id="CHEBI:36655"/>
    </ligand>
</feature>
<feature type="binding site" evidence="1">
    <location>
        <position position="207"/>
    </location>
    <ligand>
        <name>glyoxylate</name>
        <dbReference type="ChEBI" id="CHEBI:36655"/>
    </ligand>
</feature>
<feature type="binding site" evidence="1">
    <location>
        <position position="217"/>
    </location>
    <ligand>
        <name>glyoxylate</name>
        <dbReference type="ChEBI" id="CHEBI:36655"/>
    </ligand>
</feature>
<feature type="binding site" evidence="1">
    <location>
        <begin position="234"/>
        <end position="236"/>
    </location>
    <ligand>
        <name>glyoxylate</name>
        <dbReference type="ChEBI" id="CHEBI:36655"/>
    </ligand>
</feature>
<name>ALLR_ECOL6</name>